<feature type="chain" id="PRO_0000072334" description="Ceramide-binding protein svf1">
    <location>
        <begin position="1"/>
        <end position="380"/>
    </location>
</feature>
<feature type="region of interest" description="Peripherally associates with membranes" evidence="1">
    <location>
        <begin position="1"/>
        <end position="18"/>
    </location>
</feature>
<dbReference type="EMBL" id="CU329672">
    <property type="protein sequence ID" value="CAB37424.1"/>
    <property type="molecule type" value="Genomic_DNA"/>
</dbReference>
<dbReference type="PIR" id="T39131">
    <property type="entry name" value="S62525"/>
</dbReference>
<dbReference type="RefSeq" id="NP_588216.1">
    <property type="nucleotide sequence ID" value="NM_001023206.2"/>
</dbReference>
<dbReference type="SMR" id="Q09885"/>
<dbReference type="BioGRID" id="275474">
    <property type="interactions" value="40"/>
</dbReference>
<dbReference type="FunCoup" id="Q09885">
    <property type="interactions" value="22"/>
</dbReference>
<dbReference type="STRING" id="284812.Q09885"/>
<dbReference type="SwissPalm" id="Q09885"/>
<dbReference type="PaxDb" id="4896-SPCC584.11c.1"/>
<dbReference type="EnsemblFungi" id="SPCC584.11c.1">
    <property type="protein sequence ID" value="SPCC584.11c.1:pep"/>
    <property type="gene ID" value="SPCC584.11c"/>
</dbReference>
<dbReference type="GeneID" id="2538896"/>
<dbReference type="KEGG" id="spo:2538896"/>
<dbReference type="PomBase" id="SPCC584.11c">
    <property type="gene designation" value="svf1"/>
</dbReference>
<dbReference type="VEuPathDB" id="FungiDB:SPCC584.11c"/>
<dbReference type="eggNOG" id="ENOG502QQY3">
    <property type="taxonomic scope" value="Eukaryota"/>
</dbReference>
<dbReference type="HOGENOM" id="CLU_030205_2_0_1"/>
<dbReference type="InParanoid" id="Q09885"/>
<dbReference type="OMA" id="AFWPRCV"/>
<dbReference type="PhylomeDB" id="Q09885"/>
<dbReference type="PRO" id="PR:Q09885"/>
<dbReference type="Proteomes" id="UP000002485">
    <property type="component" value="Chromosome III"/>
</dbReference>
<dbReference type="GO" id="GO:0033106">
    <property type="term" value="C:cis-Golgi network membrane"/>
    <property type="evidence" value="ECO:0000250"/>
    <property type="project" value="UniProtKB"/>
</dbReference>
<dbReference type="GO" id="GO:0005737">
    <property type="term" value="C:cytoplasm"/>
    <property type="evidence" value="ECO:0000318"/>
    <property type="project" value="GO_Central"/>
</dbReference>
<dbReference type="GO" id="GO:0005829">
    <property type="term" value="C:cytosol"/>
    <property type="evidence" value="ECO:0007005"/>
    <property type="project" value="PomBase"/>
</dbReference>
<dbReference type="GO" id="GO:0005789">
    <property type="term" value="C:endoplasmic reticulum membrane"/>
    <property type="evidence" value="ECO:0007669"/>
    <property type="project" value="UniProtKB-SubCell"/>
</dbReference>
<dbReference type="GO" id="GO:0005634">
    <property type="term" value="C:nucleus"/>
    <property type="evidence" value="ECO:0007005"/>
    <property type="project" value="PomBase"/>
</dbReference>
<dbReference type="GO" id="GO:0097001">
    <property type="term" value="F:ceramide binding"/>
    <property type="evidence" value="ECO:0000250"/>
    <property type="project" value="UniProtKB"/>
</dbReference>
<dbReference type="GO" id="GO:0035621">
    <property type="term" value="P:ER to Golgi ceramide transport"/>
    <property type="evidence" value="ECO:0000250"/>
    <property type="project" value="UniProtKB"/>
</dbReference>
<dbReference type="GO" id="GO:0006979">
    <property type="term" value="P:response to oxidative stress"/>
    <property type="evidence" value="ECO:0007669"/>
    <property type="project" value="InterPro"/>
</dbReference>
<dbReference type="GO" id="GO:0030148">
    <property type="term" value="P:sphingolipid biosynthetic process"/>
    <property type="evidence" value="ECO:0000266"/>
    <property type="project" value="PomBase"/>
</dbReference>
<dbReference type="FunFam" id="2.40.370.10:FF:000001">
    <property type="entry name" value="Survival factor 1"/>
    <property type="match status" value="1"/>
</dbReference>
<dbReference type="Gene3D" id="2.40.370.10">
    <property type="entry name" value="AttH-like domain"/>
    <property type="match status" value="1"/>
</dbReference>
<dbReference type="InterPro" id="IPR023374">
    <property type="entry name" value="AttH-like_dom_sf"/>
</dbReference>
<dbReference type="InterPro" id="IPR051385">
    <property type="entry name" value="Ceramide-binding_SVF1"/>
</dbReference>
<dbReference type="InterPro" id="IPR033394">
    <property type="entry name" value="Svf1-like_C"/>
</dbReference>
<dbReference type="InterPro" id="IPR013931">
    <property type="entry name" value="Svf1-like_N"/>
</dbReference>
<dbReference type="PANTHER" id="PTHR47107:SF1">
    <property type="entry name" value="CERAMIDE-BINDING PROTEIN SVF1-RELATED"/>
    <property type="match status" value="1"/>
</dbReference>
<dbReference type="PANTHER" id="PTHR47107">
    <property type="entry name" value="SVF1-LIKE PROTEIN YDR222W-RELATED"/>
    <property type="match status" value="1"/>
</dbReference>
<dbReference type="Pfam" id="PF08622">
    <property type="entry name" value="Svf1"/>
    <property type="match status" value="1"/>
</dbReference>
<dbReference type="Pfam" id="PF17187">
    <property type="entry name" value="Svf1_C"/>
    <property type="match status" value="1"/>
</dbReference>
<dbReference type="SUPFAM" id="SSF159245">
    <property type="entry name" value="AttH-like"/>
    <property type="match status" value="1"/>
</dbReference>
<reference key="1">
    <citation type="journal article" date="2002" name="Nature">
        <title>The genome sequence of Schizosaccharomyces pombe.</title>
        <authorList>
            <person name="Wood V."/>
            <person name="Gwilliam R."/>
            <person name="Rajandream M.A."/>
            <person name="Lyne M.H."/>
            <person name="Lyne R."/>
            <person name="Stewart A."/>
            <person name="Sgouros J.G."/>
            <person name="Peat N."/>
            <person name="Hayles J."/>
            <person name="Baker S.G."/>
            <person name="Basham D."/>
            <person name="Bowman S."/>
            <person name="Brooks K."/>
            <person name="Brown D."/>
            <person name="Brown S."/>
            <person name="Chillingworth T."/>
            <person name="Churcher C.M."/>
            <person name="Collins M."/>
            <person name="Connor R."/>
            <person name="Cronin A."/>
            <person name="Davis P."/>
            <person name="Feltwell T."/>
            <person name="Fraser A."/>
            <person name="Gentles S."/>
            <person name="Goble A."/>
            <person name="Hamlin N."/>
            <person name="Harris D.E."/>
            <person name="Hidalgo J."/>
            <person name="Hodgson G."/>
            <person name="Holroyd S."/>
            <person name="Hornsby T."/>
            <person name="Howarth S."/>
            <person name="Huckle E.J."/>
            <person name="Hunt S."/>
            <person name="Jagels K."/>
            <person name="James K.D."/>
            <person name="Jones L."/>
            <person name="Jones M."/>
            <person name="Leather S."/>
            <person name="McDonald S."/>
            <person name="McLean J."/>
            <person name="Mooney P."/>
            <person name="Moule S."/>
            <person name="Mungall K.L."/>
            <person name="Murphy L.D."/>
            <person name="Niblett D."/>
            <person name="Odell C."/>
            <person name="Oliver K."/>
            <person name="O'Neil S."/>
            <person name="Pearson D."/>
            <person name="Quail M.A."/>
            <person name="Rabbinowitsch E."/>
            <person name="Rutherford K.M."/>
            <person name="Rutter S."/>
            <person name="Saunders D."/>
            <person name="Seeger K."/>
            <person name="Sharp S."/>
            <person name="Skelton J."/>
            <person name="Simmonds M.N."/>
            <person name="Squares R."/>
            <person name="Squares S."/>
            <person name="Stevens K."/>
            <person name="Taylor K."/>
            <person name="Taylor R.G."/>
            <person name="Tivey A."/>
            <person name="Walsh S.V."/>
            <person name="Warren T."/>
            <person name="Whitehead S."/>
            <person name="Woodward J.R."/>
            <person name="Volckaert G."/>
            <person name="Aert R."/>
            <person name="Robben J."/>
            <person name="Grymonprez B."/>
            <person name="Weltjens I."/>
            <person name="Vanstreels E."/>
            <person name="Rieger M."/>
            <person name="Schaefer M."/>
            <person name="Mueller-Auer S."/>
            <person name="Gabel C."/>
            <person name="Fuchs M."/>
            <person name="Duesterhoeft A."/>
            <person name="Fritzc C."/>
            <person name="Holzer E."/>
            <person name="Moestl D."/>
            <person name="Hilbert H."/>
            <person name="Borzym K."/>
            <person name="Langer I."/>
            <person name="Beck A."/>
            <person name="Lehrach H."/>
            <person name="Reinhardt R."/>
            <person name="Pohl T.M."/>
            <person name="Eger P."/>
            <person name="Zimmermann W."/>
            <person name="Wedler H."/>
            <person name="Wambutt R."/>
            <person name="Purnelle B."/>
            <person name="Goffeau A."/>
            <person name="Cadieu E."/>
            <person name="Dreano S."/>
            <person name="Gloux S."/>
            <person name="Lelaure V."/>
            <person name="Mottier S."/>
            <person name="Galibert F."/>
            <person name="Aves S.J."/>
            <person name="Xiang Z."/>
            <person name="Hunt C."/>
            <person name="Moore K."/>
            <person name="Hurst S.M."/>
            <person name="Lucas M."/>
            <person name="Rochet M."/>
            <person name="Gaillardin C."/>
            <person name="Tallada V.A."/>
            <person name="Garzon A."/>
            <person name="Thode G."/>
            <person name="Daga R.R."/>
            <person name="Cruzado L."/>
            <person name="Jimenez J."/>
            <person name="Sanchez M."/>
            <person name="del Rey F."/>
            <person name="Benito J."/>
            <person name="Dominguez A."/>
            <person name="Revuelta J.L."/>
            <person name="Moreno S."/>
            <person name="Armstrong J."/>
            <person name="Forsburg S.L."/>
            <person name="Cerutti L."/>
            <person name="Lowe T."/>
            <person name="McCombie W.R."/>
            <person name="Paulsen I."/>
            <person name="Potashkin J."/>
            <person name="Shpakovski G.V."/>
            <person name="Ussery D."/>
            <person name="Barrell B.G."/>
            <person name="Nurse P."/>
        </authorList>
    </citation>
    <scope>NUCLEOTIDE SEQUENCE [LARGE SCALE GENOMIC DNA]</scope>
    <source>
        <strain>972 / ATCC 24843</strain>
    </source>
</reference>
<comment type="function">
    <text evidence="1">Ceramide-binding protein that may transfer ceramides from the endoplasmic reticulum membrane to the cis-Golgi network membrane, and is thereby required for the biosynthesis of complex sphingolipids.</text>
</comment>
<comment type="subcellular location">
    <subcellularLocation>
        <location evidence="1">Golgi apparatus</location>
        <location evidence="1">cis-Golgi network membrane</location>
        <topology evidence="1">Peripheral membrane protein</topology>
    </subcellularLocation>
    <subcellularLocation>
        <location evidence="1">Endoplasmic reticulum membrane</location>
        <topology evidence="1">Peripheral membrane protein</topology>
    </subcellularLocation>
    <subcellularLocation>
        <location evidence="1">Cytoplasm</location>
    </subcellularLocation>
    <subcellularLocation>
        <location evidence="1">Nucleus</location>
    </subcellularLocation>
    <text evidence="1">Localizes to the interface between the cis-Golgi network and endoplasmic reticulum exit sites.</text>
</comment>
<comment type="similarity">
    <text evidence="2">Belongs to the SVF1 family.</text>
</comment>
<proteinExistence type="inferred from homology"/>
<keyword id="KW-0963">Cytoplasm</keyword>
<keyword id="KW-0256">Endoplasmic reticulum</keyword>
<keyword id="KW-0333">Golgi apparatus</keyword>
<keyword id="KW-0445">Lipid transport</keyword>
<keyword id="KW-0472">Membrane</keyword>
<keyword id="KW-0539">Nucleus</keyword>
<keyword id="KW-1185">Reference proteome</keyword>
<keyword id="KW-0813">Transport</keyword>
<organism>
    <name type="scientific">Schizosaccharomyces pombe (strain 972 / ATCC 24843)</name>
    <name type="common">Fission yeast</name>
    <dbReference type="NCBI Taxonomy" id="284812"/>
    <lineage>
        <taxon>Eukaryota</taxon>
        <taxon>Fungi</taxon>
        <taxon>Dikarya</taxon>
        <taxon>Ascomycota</taxon>
        <taxon>Taphrinomycotina</taxon>
        <taxon>Schizosaccharomycetes</taxon>
        <taxon>Schizosaccharomycetales</taxon>
        <taxon>Schizosaccharomycetaceae</taxon>
        <taxon>Schizosaccharomyces</taxon>
    </lineage>
</organism>
<protein>
    <recommendedName>
        <fullName evidence="2">Ceramide-binding protein svf1</fullName>
    </recommendedName>
    <alternativeName>
        <fullName>Survival factor 1</fullName>
    </alternativeName>
</protein>
<name>SVF1_SCHPO</name>
<evidence type="ECO:0000250" key="1">
    <source>
        <dbReference type="UniProtKB" id="Q05515"/>
    </source>
</evidence>
<evidence type="ECO:0000305" key="2"/>
<evidence type="ECO:0000312" key="3">
    <source>
        <dbReference type="PomBase" id="SPCC584.11c"/>
    </source>
</evidence>
<sequence length="380" mass="42961">MKAWLQSSISYYTGTAEPVYGPEAIQPVTASVQGINPFHRLEADDFKWSTPSSSHVETQVFYIKPNEGDYMCFVQLIHSNLGSWTTTAQSTCRIFDLKHPENDLWTSTNMDQFSFENDKTSFVAKNCSVVLEDQKRYRIRASINMDSIIDITVHQDAPPFKIGEDGNSTYGTDPSKPWASMKHTFWPRTRVEGSIVARGRVVDVTGPGMFVHALQNGKPHHLASSWEFALLQHKKFTAIMMQFKTPPSYGSTIVNIGGIAMKDKIISATVDNTIEHVETTLDPDTEWHEPTRISYEWDGKDAETYTEDIHLSVDAPLGRRLQRIDVLAEIPSWLKGFVHGVSGTKPFIYQYFSPVKFTLKMGDEVIEDEATLFNETTFIS</sequence>
<gene>
    <name evidence="3" type="primary">svf1</name>
    <name evidence="3" type="ORF">SPCC584.11c</name>
</gene>
<accession>Q09885</accession>